<sequence length="358" mass="39643">MQKIIHVDMDCFYAAVEMRDFPELRGKPIAVGGRSDRRGVISTCNYEARQFGVRSAMASGYALKLCPDLILVPGRMQVYKEVSSQIRAVFERYTYLIEPLSLDEAYLDVTDSPHCKGSATLIAEAIRADILAETGLTASAGIAPVKFLAKIASDLNKPNGQYVIRPDMINEFVKTLPLIKIPGVGKVTAKKLADLGLHTCSDVQAYPPAQLIERFGKFGTVLIERSKGVDKRGISPNRERKSVGVETTLAKDIHTLEQCRAVMPQLIQELGARVSRSAKDRTIHKQVVKIKFEDFKQTTIEHRSDDISVNLFYQLLEQAMERQHERGIRLLGVSVGLASNSSTTDDSDVDSSQLDLGF</sequence>
<comment type="function">
    <text evidence="1">Poorly processive, error-prone DNA polymerase involved in untargeted mutagenesis. Copies undamaged DNA at stalled replication forks, which arise in vivo from mismatched or misaligned primer ends. These misaligned primers can be extended by PolIV. Exhibits no 3'-5' exonuclease (proofreading) activity. May be involved in translesional synthesis, in conjunction with the beta clamp from PolIII.</text>
</comment>
<comment type="catalytic activity">
    <reaction evidence="1">
        <text>DNA(n) + a 2'-deoxyribonucleoside 5'-triphosphate = DNA(n+1) + diphosphate</text>
        <dbReference type="Rhea" id="RHEA:22508"/>
        <dbReference type="Rhea" id="RHEA-COMP:17339"/>
        <dbReference type="Rhea" id="RHEA-COMP:17340"/>
        <dbReference type="ChEBI" id="CHEBI:33019"/>
        <dbReference type="ChEBI" id="CHEBI:61560"/>
        <dbReference type="ChEBI" id="CHEBI:173112"/>
        <dbReference type="EC" id="2.7.7.7"/>
    </reaction>
</comment>
<comment type="cofactor">
    <cofactor evidence="1">
        <name>Mg(2+)</name>
        <dbReference type="ChEBI" id="CHEBI:18420"/>
    </cofactor>
    <text evidence="1">Binds 2 magnesium ions per subunit.</text>
</comment>
<comment type="subunit">
    <text evidence="1">Monomer.</text>
</comment>
<comment type="subcellular location">
    <subcellularLocation>
        <location evidence="1">Cytoplasm</location>
    </subcellularLocation>
</comment>
<comment type="similarity">
    <text evidence="1">Belongs to the DNA polymerase type-Y family.</text>
</comment>
<proteinExistence type="inferred from homology"/>
<organism>
    <name type="scientific">Shewanella pealeana (strain ATCC 700345 / ANG-SQ1)</name>
    <dbReference type="NCBI Taxonomy" id="398579"/>
    <lineage>
        <taxon>Bacteria</taxon>
        <taxon>Pseudomonadati</taxon>
        <taxon>Pseudomonadota</taxon>
        <taxon>Gammaproteobacteria</taxon>
        <taxon>Alteromonadales</taxon>
        <taxon>Shewanellaceae</taxon>
        <taxon>Shewanella</taxon>
    </lineage>
</organism>
<gene>
    <name evidence="1" type="primary">dinB</name>
    <name type="ordered locus">Spea_3092</name>
</gene>
<feature type="chain" id="PRO_1000084934" description="DNA polymerase IV">
    <location>
        <begin position="1"/>
        <end position="358"/>
    </location>
</feature>
<feature type="domain" description="UmuC" evidence="1">
    <location>
        <begin position="4"/>
        <end position="185"/>
    </location>
</feature>
<feature type="active site" evidence="1">
    <location>
        <position position="104"/>
    </location>
</feature>
<feature type="binding site" evidence="1">
    <location>
        <position position="8"/>
    </location>
    <ligand>
        <name>Mg(2+)</name>
        <dbReference type="ChEBI" id="CHEBI:18420"/>
    </ligand>
</feature>
<feature type="binding site" evidence="1">
    <location>
        <position position="103"/>
    </location>
    <ligand>
        <name>Mg(2+)</name>
        <dbReference type="ChEBI" id="CHEBI:18420"/>
    </ligand>
</feature>
<feature type="site" description="Substrate discrimination" evidence="1">
    <location>
        <position position="13"/>
    </location>
</feature>
<dbReference type="EC" id="2.7.7.7" evidence="1"/>
<dbReference type="EMBL" id="CP000851">
    <property type="protein sequence ID" value="ABV88408.1"/>
    <property type="molecule type" value="Genomic_DNA"/>
</dbReference>
<dbReference type="RefSeq" id="WP_012156310.1">
    <property type="nucleotide sequence ID" value="NC_009901.1"/>
</dbReference>
<dbReference type="SMR" id="A8H771"/>
<dbReference type="STRING" id="398579.Spea_3092"/>
<dbReference type="KEGG" id="spl:Spea_3092"/>
<dbReference type="eggNOG" id="COG0389">
    <property type="taxonomic scope" value="Bacteria"/>
</dbReference>
<dbReference type="HOGENOM" id="CLU_012348_1_2_6"/>
<dbReference type="OrthoDB" id="9808813at2"/>
<dbReference type="Proteomes" id="UP000002608">
    <property type="component" value="Chromosome"/>
</dbReference>
<dbReference type="GO" id="GO:0005829">
    <property type="term" value="C:cytosol"/>
    <property type="evidence" value="ECO:0007669"/>
    <property type="project" value="TreeGrafter"/>
</dbReference>
<dbReference type="GO" id="GO:0003684">
    <property type="term" value="F:damaged DNA binding"/>
    <property type="evidence" value="ECO:0007669"/>
    <property type="project" value="InterPro"/>
</dbReference>
<dbReference type="GO" id="GO:0003887">
    <property type="term" value="F:DNA-directed DNA polymerase activity"/>
    <property type="evidence" value="ECO:0007669"/>
    <property type="project" value="UniProtKB-UniRule"/>
</dbReference>
<dbReference type="GO" id="GO:0000287">
    <property type="term" value="F:magnesium ion binding"/>
    <property type="evidence" value="ECO:0007669"/>
    <property type="project" value="UniProtKB-UniRule"/>
</dbReference>
<dbReference type="GO" id="GO:0006261">
    <property type="term" value="P:DNA-templated DNA replication"/>
    <property type="evidence" value="ECO:0007669"/>
    <property type="project" value="UniProtKB-UniRule"/>
</dbReference>
<dbReference type="GO" id="GO:0042276">
    <property type="term" value="P:error-prone translesion synthesis"/>
    <property type="evidence" value="ECO:0007669"/>
    <property type="project" value="TreeGrafter"/>
</dbReference>
<dbReference type="GO" id="GO:0009432">
    <property type="term" value="P:SOS response"/>
    <property type="evidence" value="ECO:0007669"/>
    <property type="project" value="TreeGrafter"/>
</dbReference>
<dbReference type="CDD" id="cd03586">
    <property type="entry name" value="PolY_Pol_IV_kappa"/>
    <property type="match status" value="1"/>
</dbReference>
<dbReference type="FunFam" id="1.10.150.20:FF:000019">
    <property type="entry name" value="DNA polymerase IV"/>
    <property type="match status" value="1"/>
</dbReference>
<dbReference type="FunFam" id="3.30.70.270:FF:000002">
    <property type="entry name" value="DNA polymerase IV"/>
    <property type="match status" value="1"/>
</dbReference>
<dbReference type="FunFam" id="3.40.1170.60:FF:000001">
    <property type="entry name" value="DNA polymerase IV"/>
    <property type="match status" value="1"/>
</dbReference>
<dbReference type="Gene3D" id="3.30.70.270">
    <property type="match status" value="1"/>
</dbReference>
<dbReference type="Gene3D" id="3.40.1170.60">
    <property type="match status" value="1"/>
</dbReference>
<dbReference type="Gene3D" id="1.10.150.20">
    <property type="entry name" value="5' to 3' exonuclease, C-terminal subdomain"/>
    <property type="match status" value="1"/>
</dbReference>
<dbReference type="Gene3D" id="3.30.1490.100">
    <property type="entry name" value="DNA polymerase, Y-family, little finger domain"/>
    <property type="match status" value="1"/>
</dbReference>
<dbReference type="HAMAP" id="MF_01113">
    <property type="entry name" value="DNApol_IV"/>
    <property type="match status" value="1"/>
</dbReference>
<dbReference type="InterPro" id="IPR043502">
    <property type="entry name" value="DNA/RNA_pol_sf"/>
</dbReference>
<dbReference type="InterPro" id="IPR036775">
    <property type="entry name" value="DNA_pol_Y-fam_lit_finger_sf"/>
</dbReference>
<dbReference type="InterPro" id="IPR017961">
    <property type="entry name" value="DNA_pol_Y-fam_little_finger"/>
</dbReference>
<dbReference type="InterPro" id="IPR050116">
    <property type="entry name" value="DNA_polymerase-Y"/>
</dbReference>
<dbReference type="InterPro" id="IPR022880">
    <property type="entry name" value="DNApol_IV"/>
</dbReference>
<dbReference type="InterPro" id="IPR053848">
    <property type="entry name" value="IMS_HHH_1"/>
</dbReference>
<dbReference type="InterPro" id="IPR043128">
    <property type="entry name" value="Rev_trsase/Diguanyl_cyclase"/>
</dbReference>
<dbReference type="InterPro" id="IPR001126">
    <property type="entry name" value="UmuC"/>
</dbReference>
<dbReference type="NCBIfam" id="NF002677">
    <property type="entry name" value="PRK02406.1"/>
    <property type="match status" value="1"/>
</dbReference>
<dbReference type="PANTHER" id="PTHR11076:SF33">
    <property type="entry name" value="DNA POLYMERASE KAPPA"/>
    <property type="match status" value="1"/>
</dbReference>
<dbReference type="PANTHER" id="PTHR11076">
    <property type="entry name" value="DNA REPAIR POLYMERASE UMUC / TRANSFERASE FAMILY MEMBER"/>
    <property type="match status" value="1"/>
</dbReference>
<dbReference type="Pfam" id="PF00817">
    <property type="entry name" value="IMS"/>
    <property type="match status" value="1"/>
</dbReference>
<dbReference type="Pfam" id="PF11799">
    <property type="entry name" value="IMS_C"/>
    <property type="match status" value="1"/>
</dbReference>
<dbReference type="Pfam" id="PF21999">
    <property type="entry name" value="IMS_HHH_1"/>
    <property type="match status" value="1"/>
</dbReference>
<dbReference type="SUPFAM" id="SSF56672">
    <property type="entry name" value="DNA/RNA polymerases"/>
    <property type="match status" value="1"/>
</dbReference>
<dbReference type="SUPFAM" id="SSF100879">
    <property type="entry name" value="Lesion bypass DNA polymerase (Y-family), little finger domain"/>
    <property type="match status" value="1"/>
</dbReference>
<dbReference type="PROSITE" id="PS50173">
    <property type="entry name" value="UMUC"/>
    <property type="match status" value="1"/>
</dbReference>
<name>DPO4_SHEPA</name>
<keyword id="KW-0963">Cytoplasm</keyword>
<keyword id="KW-0227">DNA damage</keyword>
<keyword id="KW-0234">DNA repair</keyword>
<keyword id="KW-0235">DNA replication</keyword>
<keyword id="KW-0238">DNA-binding</keyword>
<keyword id="KW-0239">DNA-directed DNA polymerase</keyword>
<keyword id="KW-0460">Magnesium</keyword>
<keyword id="KW-0479">Metal-binding</keyword>
<keyword id="KW-0515">Mutator protein</keyword>
<keyword id="KW-0548">Nucleotidyltransferase</keyword>
<keyword id="KW-1185">Reference proteome</keyword>
<keyword id="KW-0808">Transferase</keyword>
<evidence type="ECO:0000255" key="1">
    <source>
        <dbReference type="HAMAP-Rule" id="MF_01113"/>
    </source>
</evidence>
<protein>
    <recommendedName>
        <fullName evidence="1">DNA polymerase IV</fullName>
        <shortName evidence="1">Pol IV</shortName>
        <ecNumber evidence="1">2.7.7.7</ecNumber>
    </recommendedName>
</protein>
<reference key="1">
    <citation type="submission" date="2007-10" db="EMBL/GenBank/DDBJ databases">
        <title>Complete sequence of Shewanella pealeana ATCC 700345.</title>
        <authorList>
            <consortium name="US DOE Joint Genome Institute"/>
            <person name="Copeland A."/>
            <person name="Lucas S."/>
            <person name="Lapidus A."/>
            <person name="Barry K."/>
            <person name="Glavina del Rio T."/>
            <person name="Dalin E."/>
            <person name="Tice H."/>
            <person name="Pitluck S."/>
            <person name="Chertkov O."/>
            <person name="Brettin T."/>
            <person name="Bruce D."/>
            <person name="Detter J.C."/>
            <person name="Han C."/>
            <person name="Schmutz J."/>
            <person name="Larimer F."/>
            <person name="Land M."/>
            <person name="Hauser L."/>
            <person name="Kyrpides N."/>
            <person name="Kim E."/>
            <person name="Zhao J.-S.Z."/>
            <person name="Manno D."/>
            <person name="Hawari J."/>
            <person name="Richardson P."/>
        </authorList>
    </citation>
    <scope>NUCLEOTIDE SEQUENCE [LARGE SCALE GENOMIC DNA]</scope>
    <source>
        <strain>ATCC 700345 / ANG-SQ1</strain>
    </source>
</reference>
<accession>A8H771</accession>